<name>BSDC1_HUMAN</name>
<accession>Q9NW68</accession>
<accession>B4DMS7</accession>
<accession>B4DTI7</accession>
<accession>B4DTP7</accession>
<accession>B4E2X8</accession>
<accession>Q49AT8</accession>
<accession>Q68DY6</accession>
<accession>Q6IAA3</accession>
<accession>Q6MZK1</accession>
<accession>Q6UXS1</accession>
<accession>Q9HAL9</accession>
<organism>
    <name type="scientific">Homo sapiens</name>
    <name type="common">Human</name>
    <dbReference type="NCBI Taxonomy" id="9606"/>
    <lineage>
        <taxon>Eukaryota</taxon>
        <taxon>Metazoa</taxon>
        <taxon>Chordata</taxon>
        <taxon>Craniata</taxon>
        <taxon>Vertebrata</taxon>
        <taxon>Euteleostomi</taxon>
        <taxon>Mammalia</taxon>
        <taxon>Eutheria</taxon>
        <taxon>Euarchontoglires</taxon>
        <taxon>Primates</taxon>
        <taxon>Haplorrhini</taxon>
        <taxon>Catarrhini</taxon>
        <taxon>Hominidae</taxon>
        <taxon>Homo</taxon>
    </lineage>
</organism>
<sequence length="430" mass="47163">MAEGEDVGWWRSWLQQSYQAVKEKSSEALEFMKRDLTEFTQVVQHDTACTIAATASVVKEKLATEGSSGATEKMKKGLSDFLGVISDTFAPSPDKTIDCDVITLMGTPSGTAEPYDGTKARLYSLQSDPATYCNEPDGPPELFDAWLSQFCLEEKKGEISELLVGSPSIRALYTKMVPAAVSHSEFWHRYFYKVHQLEQEQARRDALKQRAEQSISEEPGWEEEEEELMGISPISPKEAKVPVAKISTFPEGEPGPQSPCEENLVTSVEPPAEVTPSESSESISLVTQIANPATAPEARVLPKDLSQKLLEASLEEQGLAVDVGETGPSPPIHSKPLTPAGHTGGPEPRPPARVETLREEAPTDLRVFELNSDSGKSTPSNNGKKGSSTDISEDWEKDFDLDMTEEEVQMALSKVDASGELEDVEWEDWE</sequence>
<keyword id="KW-0025">Alternative splicing</keyword>
<keyword id="KW-0597">Phosphoprotein</keyword>
<keyword id="KW-1267">Proteomics identification</keyword>
<keyword id="KW-1185">Reference proteome</keyword>
<dbReference type="EMBL" id="AY358230">
    <property type="protein sequence ID" value="AAQ88597.1"/>
    <property type="molecule type" value="mRNA"/>
</dbReference>
<dbReference type="EMBL" id="AK001138">
    <property type="protein sequence ID" value="BAA91517.1"/>
    <property type="molecule type" value="mRNA"/>
</dbReference>
<dbReference type="EMBL" id="AK021440">
    <property type="protein sequence ID" value="BAB13825.1"/>
    <property type="molecule type" value="mRNA"/>
</dbReference>
<dbReference type="EMBL" id="AK297604">
    <property type="protein sequence ID" value="BAG59989.1"/>
    <property type="molecule type" value="mRNA"/>
</dbReference>
<dbReference type="EMBL" id="AK300231">
    <property type="protein sequence ID" value="BAG61999.1"/>
    <property type="molecule type" value="mRNA"/>
</dbReference>
<dbReference type="EMBL" id="AK300306">
    <property type="protein sequence ID" value="BAG62059.1"/>
    <property type="molecule type" value="mRNA"/>
</dbReference>
<dbReference type="EMBL" id="AK304477">
    <property type="protein sequence ID" value="BAG65290.1"/>
    <property type="molecule type" value="mRNA"/>
</dbReference>
<dbReference type="EMBL" id="CR457252">
    <property type="protein sequence ID" value="CAG33533.1"/>
    <property type="molecule type" value="mRNA"/>
</dbReference>
<dbReference type="EMBL" id="BX641056">
    <property type="protein sequence ID" value="CAE46029.1"/>
    <property type="molecule type" value="mRNA"/>
</dbReference>
<dbReference type="EMBL" id="CR749228">
    <property type="protein sequence ID" value="CAH18084.1"/>
    <property type="molecule type" value="mRNA"/>
</dbReference>
<dbReference type="EMBL" id="AL109945">
    <property type="status" value="NOT_ANNOTATED_CDS"/>
    <property type="molecule type" value="Genomic_DNA"/>
</dbReference>
<dbReference type="EMBL" id="CH471059">
    <property type="protein sequence ID" value="EAX07526.1"/>
    <property type="molecule type" value="Genomic_DNA"/>
</dbReference>
<dbReference type="EMBL" id="BC026322">
    <property type="protein sequence ID" value="AAH26322.1"/>
    <property type="molecule type" value="mRNA"/>
</dbReference>
<dbReference type="EMBL" id="BC028381">
    <property type="protein sequence ID" value="AAH28381.1"/>
    <property type="molecule type" value="mRNA"/>
</dbReference>
<dbReference type="CCDS" id="CCDS363.2">
    <molecule id="Q9NW68-1"/>
</dbReference>
<dbReference type="CCDS" id="CCDS44101.1">
    <molecule id="Q9NW68-9"/>
</dbReference>
<dbReference type="CCDS" id="CCDS44102.1">
    <molecule id="Q9NW68-8"/>
</dbReference>
<dbReference type="CCDS" id="CCDS44103.1">
    <molecule id="Q9NW68-7"/>
</dbReference>
<dbReference type="CCDS" id="CCDS72752.1">
    <molecule id="Q9NW68-3"/>
</dbReference>
<dbReference type="RefSeq" id="NP_001137360.1">
    <molecule id="Q9NW68-7"/>
    <property type="nucleotide sequence ID" value="NM_001143888.3"/>
</dbReference>
<dbReference type="RefSeq" id="NP_001137361.1">
    <molecule id="Q9NW68-8"/>
    <property type="nucleotide sequence ID" value="NM_001143889.3"/>
</dbReference>
<dbReference type="RefSeq" id="NP_001137362.1">
    <molecule id="Q9NW68-9"/>
    <property type="nucleotide sequence ID" value="NM_001143890.3"/>
</dbReference>
<dbReference type="RefSeq" id="NP_001287887.1">
    <molecule id="Q9NW68-3"/>
    <property type="nucleotide sequence ID" value="NM_001300958.2"/>
</dbReference>
<dbReference type="RefSeq" id="NP_060515.3">
    <molecule id="Q9NW68-1"/>
    <property type="nucleotide sequence ID" value="NM_018045.7"/>
</dbReference>
<dbReference type="SMR" id="Q9NW68"/>
<dbReference type="BioGRID" id="120418">
    <property type="interactions" value="31"/>
</dbReference>
<dbReference type="FunCoup" id="Q9NW68">
    <property type="interactions" value="1641"/>
</dbReference>
<dbReference type="IntAct" id="Q9NW68">
    <property type="interactions" value="18"/>
</dbReference>
<dbReference type="MINT" id="Q9NW68"/>
<dbReference type="STRING" id="9606.ENSP00000344816"/>
<dbReference type="GlyGen" id="Q9NW68">
    <property type="glycosylation" value="2 sites, 1 O-linked glycan (1 site)"/>
</dbReference>
<dbReference type="iPTMnet" id="Q9NW68"/>
<dbReference type="PhosphoSitePlus" id="Q9NW68"/>
<dbReference type="SwissPalm" id="Q9NW68"/>
<dbReference type="BioMuta" id="BSDC1"/>
<dbReference type="DMDM" id="74753009"/>
<dbReference type="jPOST" id="Q9NW68"/>
<dbReference type="MassIVE" id="Q9NW68"/>
<dbReference type="PaxDb" id="9606-ENSP00000344816"/>
<dbReference type="PeptideAtlas" id="Q9NW68"/>
<dbReference type="ProteomicsDB" id="82899">
    <molecule id="Q9NW68-1"/>
</dbReference>
<dbReference type="ProteomicsDB" id="82900">
    <molecule id="Q9NW68-2"/>
</dbReference>
<dbReference type="ProteomicsDB" id="82901">
    <molecule id="Q9NW68-3"/>
</dbReference>
<dbReference type="ProteomicsDB" id="82902">
    <molecule id="Q9NW68-4"/>
</dbReference>
<dbReference type="ProteomicsDB" id="82903">
    <molecule id="Q9NW68-5"/>
</dbReference>
<dbReference type="ProteomicsDB" id="82904">
    <molecule id="Q9NW68-6"/>
</dbReference>
<dbReference type="ProteomicsDB" id="82905">
    <molecule id="Q9NW68-7"/>
</dbReference>
<dbReference type="ProteomicsDB" id="82906">
    <molecule id="Q9NW68-8"/>
</dbReference>
<dbReference type="ProteomicsDB" id="82907">
    <molecule id="Q9NW68-9"/>
</dbReference>
<dbReference type="Pumba" id="Q9NW68"/>
<dbReference type="Antibodypedia" id="16954">
    <property type="antibodies" value="120 antibodies from 19 providers"/>
</dbReference>
<dbReference type="DNASU" id="55108"/>
<dbReference type="Ensembl" id="ENST00000341071.11">
    <molecule id="Q9NW68-3"/>
    <property type="protein sequence ID" value="ENSP00000344816.7"/>
    <property type="gene ID" value="ENSG00000160058.19"/>
</dbReference>
<dbReference type="Ensembl" id="ENST00000419121.6">
    <molecule id="Q9NW68-8"/>
    <property type="protein sequence ID" value="ENSP00000405752.2"/>
    <property type="gene ID" value="ENSG00000160058.19"/>
</dbReference>
<dbReference type="Ensembl" id="ENST00000444377.5">
    <molecule id="Q9NW68-2"/>
    <property type="protein sequence ID" value="ENSP00000414103.1"/>
    <property type="gene ID" value="ENSG00000160058.19"/>
</dbReference>
<dbReference type="Ensembl" id="ENST00000446293.6">
    <molecule id="Q9NW68-7"/>
    <property type="protein sequence ID" value="ENSP00000397759.2"/>
    <property type="gene ID" value="ENSG00000160058.19"/>
</dbReference>
<dbReference type="Ensembl" id="ENST00000455895.7">
    <molecule id="Q9NW68-1"/>
    <property type="protein sequence ID" value="ENSP00000412173.2"/>
    <property type="gene ID" value="ENSG00000160058.19"/>
</dbReference>
<dbReference type="Ensembl" id="ENST00000526031.5">
    <molecule id="Q9NW68-9"/>
    <property type="protein sequence ID" value="ENSP00000432382.1"/>
    <property type="gene ID" value="ENSG00000160058.19"/>
</dbReference>
<dbReference type="GeneID" id="55108"/>
<dbReference type="KEGG" id="hsa:55108"/>
<dbReference type="MANE-Select" id="ENST00000455895.7">
    <property type="protein sequence ID" value="ENSP00000412173.2"/>
    <property type="RefSeq nucleotide sequence ID" value="NM_018045.8"/>
    <property type="RefSeq protein sequence ID" value="NP_060515.3"/>
</dbReference>
<dbReference type="UCSC" id="uc001bvh.5">
    <molecule id="Q9NW68-1"/>
    <property type="organism name" value="human"/>
</dbReference>
<dbReference type="AGR" id="HGNC:25501"/>
<dbReference type="CTD" id="55108"/>
<dbReference type="DisGeNET" id="55108"/>
<dbReference type="GeneCards" id="BSDC1"/>
<dbReference type="HGNC" id="HGNC:25501">
    <property type="gene designation" value="BSDC1"/>
</dbReference>
<dbReference type="HPA" id="ENSG00000160058">
    <property type="expression patterns" value="Low tissue specificity"/>
</dbReference>
<dbReference type="MIM" id="617518">
    <property type="type" value="gene"/>
</dbReference>
<dbReference type="neXtProt" id="NX_Q9NW68"/>
<dbReference type="OpenTargets" id="ENSG00000160058"/>
<dbReference type="PharmGKB" id="PA142672548"/>
<dbReference type="VEuPathDB" id="HostDB:ENSG00000160058"/>
<dbReference type="eggNOG" id="KOG2690">
    <property type="taxonomic scope" value="Eukaryota"/>
</dbReference>
<dbReference type="GeneTree" id="ENSGT00390000009361"/>
<dbReference type="HOGENOM" id="CLU_053864_0_0_1"/>
<dbReference type="InParanoid" id="Q9NW68"/>
<dbReference type="OMA" id="TCFLCWF"/>
<dbReference type="OrthoDB" id="73788at2759"/>
<dbReference type="PAN-GO" id="Q9NW68">
    <property type="GO annotations" value="1 GO annotation based on evolutionary models"/>
</dbReference>
<dbReference type="PhylomeDB" id="Q9NW68"/>
<dbReference type="TreeFam" id="TF313210"/>
<dbReference type="PathwayCommons" id="Q9NW68"/>
<dbReference type="SignaLink" id="Q9NW68"/>
<dbReference type="BioGRID-ORCS" id="55108">
    <property type="hits" value="22 hits in 1160 CRISPR screens"/>
</dbReference>
<dbReference type="ChiTaRS" id="BSDC1">
    <property type="organism name" value="human"/>
</dbReference>
<dbReference type="GenomeRNAi" id="55108"/>
<dbReference type="Pharos" id="Q9NW68">
    <property type="development level" value="Tdark"/>
</dbReference>
<dbReference type="PRO" id="PR:Q9NW68"/>
<dbReference type="Proteomes" id="UP000005640">
    <property type="component" value="Chromosome 1"/>
</dbReference>
<dbReference type="RNAct" id="Q9NW68">
    <property type="molecule type" value="protein"/>
</dbReference>
<dbReference type="Bgee" id="ENSG00000160058">
    <property type="expression patterns" value="Expressed in sural nerve and 212 other cell types or tissues"/>
</dbReference>
<dbReference type="ExpressionAtlas" id="Q9NW68">
    <property type="expression patterns" value="baseline and differential"/>
</dbReference>
<dbReference type="GO" id="GO:0005737">
    <property type="term" value="C:cytoplasm"/>
    <property type="evidence" value="ECO:0000318"/>
    <property type="project" value="GO_Central"/>
</dbReference>
<dbReference type="Gene3D" id="1.10.3970.10">
    <property type="entry name" value="BSD domain"/>
    <property type="match status" value="1"/>
</dbReference>
<dbReference type="InterPro" id="IPR005607">
    <property type="entry name" value="BSD_dom"/>
</dbReference>
<dbReference type="InterPro" id="IPR035925">
    <property type="entry name" value="BSD_dom_sf"/>
</dbReference>
<dbReference type="InterPro" id="IPR051494">
    <property type="entry name" value="BSD_domain-containing"/>
</dbReference>
<dbReference type="PANTHER" id="PTHR16019:SF5">
    <property type="entry name" value="BSD DOMAIN-CONTAINING PROTEIN 1"/>
    <property type="match status" value="1"/>
</dbReference>
<dbReference type="PANTHER" id="PTHR16019">
    <property type="entry name" value="SYNAPSE-ASSOCIATED PROTEIN"/>
    <property type="match status" value="1"/>
</dbReference>
<dbReference type="Pfam" id="PF03909">
    <property type="entry name" value="BSD"/>
    <property type="match status" value="1"/>
</dbReference>
<dbReference type="SMART" id="SM00751">
    <property type="entry name" value="BSD"/>
    <property type="match status" value="1"/>
</dbReference>
<dbReference type="SUPFAM" id="SSF140383">
    <property type="entry name" value="BSD domain-like"/>
    <property type="match status" value="1"/>
</dbReference>
<dbReference type="PROSITE" id="PS50858">
    <property type="entry name" value="BSD"/>
    <property type="match status" value="1"/>
</dbReference>
<protein>
    <recommendedName>
        <fullName>BSD domain-containing protein 1</fullName>
    </recommendedName>
</protein>
<reference key="1">
    <citation type="journal article" date="2003" name="Genome Res.">
        <title>The secreted protein discovery initiative (SPDI), a large-scale effort to identify novel human secreted and transmembrane proteins: a bioinformatics assessment.</title>
        <authorList>
            <person name="Clark H.F."/>
            <person name="Gurney A.L."/>
            <person name="Abaya E."/>
            <person name="Baker K."/>
            <person name="Baldwin D.T."/>
            <person name="Brush J."/>
            <person name="Chen J."/>
            <person name="Chow B."/>
            <person name="Chui C."/>
            <person name="Crowley C."/>
            <person name="Currell B."/>
            <person name="Deuel B."/>
            <person name="Dowd P."/>
            <person name="Eaton D."/>
            <person name="Foster J.S."/>
            <person name="Grimaldi C."/>
            <person name="Gu Q."/>
            <person name="Hass P.E."/>
            <person name="Heldens S."/>
            <person name="Huang A."/>
            <person name="Kim H.S."/>
            <person name="Klimowski L."/>
            <person name="Jin Y."/>
            <person name="Johnson S."/>
            <person name="Lee J."/>
            <person name="Lewis L."/>
            <person name="Liao D."/>
            <person name="Mark M.R."/>
            <person name="Robbie E."/>
            <person name="Sanchez C."/>
            <person name="Schoenfeld J."/>
            <person name="Seshagiri S."/>
            <person name="Simmons L."/>
            <person name="Singh J."/>
            <person name="Smith V."/>
            <person name="Stinson J."/>
            <person name="Vagts A."/>
            <person name="Vandlen R.L."/>
            <person name="Watanabe C."/>
            <person name="Wieand D."/>
            <person name="Woods K."/>
            <person name="Xie M.-H."/>
            <person name="Yansura D.G."/>
            <person name="Yi S."/>
            <person name="Yu G."/>
            <person name="Yuan J."/>
            <person name="Zhang M."/>
            <person name="Zhang Z."/>
            <person name="Goddard A.D."/>
            <person name="Wood W.I."/>
            <person name="Godowski P.J."/>
            <person name="Gray A.M."/>
        </authorList>
    </citation>
    <scope>NUCLEOTIDE SEQUENCE [LARGE SCALE MRNA] (ISOFORM 6)</scope>
</reference>
<reference key="2">
    <citation type="journal article" date="2004" name="Nat. Genet.">
        <title>Complete sequencing and characterization of 21,243 full-length human cDNAs.</title>
        <authorList>
            <person name="Ota T."/>
            <person name="Suzuki Y."/>
            <person name="Nishikawa T."/>
            <person name="Otsuki T."/>
            <person name="Sugiyama T."/>
            <person name="Irie R."/>
            <person name="Wakamatsu A."/>
            <person name="Hayashi K."/>
            <person name="Sato H."/>
            <person name="Nagai K."/>
            <person name="Kimura K."/>
            <person name="Makita H."/>
            <person name="Sekine M."/>
            <person name="Obayashi M."/>
            <person name="Nishi T."/>
            <person name="Shibahara T."/>
            <person name="Tanaka T."/>
            <person name="Ishii S."/>
            <person name="Yamamoto J."/>
            <person name="Saito K."/>
            <person name="Kawai Y."/>
            <person name="Isono Y."/>
            <person name="Nakamura Y."/>
            <person name="Nagahari K."/>
            <person name="Murakami K."/>
            <person name="Yasuda T."/>
            <person name="Iwayanagi T."/>
            <person name="Wagatsuma M."/>
            <person name="Shiratori A."/>
            <person name="Sudo H."/>
            <person name="Hosoiri T."/>
            <person name="Kaku Y."/>
            <person name="Kodaira H."/>
            <person name="Kondo H."/>
            <person name="Sugawara M."/>
            <person name="Takahashi M."/>
            <person name="Kanda K."/>
            <person name="Yokoi T."/>
            <person name="Furuya T."/>
            <person name="Kikkawa E."/>
            <person name="Omura Y."/>
            <person name="Abe K."/>
            <person name="Kamihara K."/>
            <person name="Katsuta N."/>
            <person name="Sato K."/>
            <person name="Tanikawa M."/>
            <person name="Yamazaki M."/>
            <person name="Ninomiya K."/>
            <person name="Ishibashi T."/>
            <person name="Yamashita H."/>
            <person name="Murakawa K."/>
            <person name="Fujimori K."/>
            <person name="Tanai H."/>
            <person name="Kimata M."/>
            <person name="Watanabe M."/>
            <person name="Hiraoka S."/>
            <person name="Chiba Y."/>
            <person name="Ishida S."/>
            <person name="Ono Y."/>
            <person name="Takiguchi S."/>
            <person name="Watanabe S."/>
            <person name="Yosida M."/>
            <person name="Hotuta T."/>
            <person name="Kusano J."/>
            <person name="Kanehori K."/>
            <person name="Takahashi-Fujii A."/>
            <person name="Hara H."/>
            <person name="Tanase T.-O."/>
            <person name="Nomura Y."/>
            <person name="Togiya S."/>
            <person name="Komai F."/>
            <person name="Hara R."/>
            <person name="Takeuchi K."/>
            <person name="Arita M."/>
            <person name="Imose N."/>
            <person name="Musashino K."/>
            <person name="Yuuki H."/>
            <person name="Oshima A."/>
            <person name="Sasaki N."/>
            <person name="Aotsuka S."/>
            <person name="Yoshikawa Y."/>
            <person name="Matsunawa H."/>
            <person name="Ichihara T."/>
            <person name="Shiohata N."/>
            <person name="Sano S."/>
            <person name="Moriya S."/>
            <person name="Momiyama H."/>
            <person name="Satoh N."/>
            <person name="Takami S."/>
            <person name="Terashima Y."/>
            <person name="Suzuki O."/>
            <person name="Nakagawa S."/>
            <person name="Senoh A."/>
            <person name="Mizoguchi H."/>
            <person name="Goto Y."/>
            <person name="Shimizu F."/>
            <person name="Wakebe H."/>
            <person name="Hishigaki H."/>
            <person name="Watanabe T."/>
            <person name="Sugiyama A."/>
            <person name="Takemoto M."/>
            <person name="Kawakami B."/>
            <person name="Yamazaki M."/>
            <person name="Watanabe K."/>
            <person name="Kumagai A."/>
            <person name="Itakura S."/>
            <person name="Fukuzumi Y."/>
            <person name="Fujimori Y."/>
            <person name="Komiyama M."/>
            <person name="Tashiro H."/>
            <person name="Tanigami A."/>
            <person name="Fujiwara T."/>
            <person name="Ono T."/>
            <person name="Yamada K."/>
            <person name="Fujii Y."/>
            <person name="Ozaki K."/>
            <person name="Hirao M."/>
            <person name="Ohmori Y."/>
            <person name="Kawabata A."/>
            <person name="Hikiji T."/>
            <person name="Kobatake N."/>
            <person name="Inagaki H."/>
            <person name="Ikema Y."/>
            <person name="Okamoto S."/>
            <person name="Okitani R."/>
            <person name="Kawakami T."/>
            <person name="Noguchi S."/>
            <person name="Itoh T."/>
            <person name="Shigeta K."/>
            <person name="Senba T."/>
            <person name="Matsumura K."/>
            <person name="Nakajima Y."/>
            <person name="Mizuno T."/>
            <person name="Morinaga M."/>
            <person name="Sasaki M."/>
            <person name="Togashi T."/>
            <person name="Oyama M."/>
            <person name="Hata H."/>
            <person name="Watanabe M."/>
            <person name="Komatsu T."/>
            <person name="Mizushima-Sugano J."/>
            <person name="Satoh T."/>
            <person name="Shirai Y."/>
            <person name="Takahashi Y."/>
            <person name="Nakagawa K."/>
            <person name="Okumura K."/>
            <person name="Nagase T."/>
            <person name="Nomura N."/>
            <person name="Kikuchi H."/>
            <person name="Masuho Y."/>
            <person name="Yamashita R."/>
            <person name="Nakai K."/>
            <person name="Yada T."/>
            <person name="Nakamura Y."/>
            <person name="Ohara O."/>
            <person name="Isogai T."/>
            <person name="Sugano S."/>
        </authorList>
    </citation>
    <scope>NUCLEOTIDE SEQUENCE [LARGE SCALE MRNA] (ISOFORMS 1; 4; 5; 7; 8 AND 9)</scope>
    <source>
        <tissue>Brain</tissue>
        <tissue>Embryo</tissue>
        <tissue>Placenta</tissue>
        <tissue>Uterus</tissue>
    </source>
</reference>
<reference key="3">
    <citation type="submission" date="2004-06" db="EMBL/GenBank/DDBJ databases">
        <title>Cloning of human full open reading frames in Gateway(TM) system entry vector (pDONR201).</title>
        <authorList>
            <person name="Ebert L."/>
            <person name="Schick M."/>
            <person name="Neubert P."/>
            <person name="Schatten R."/>
            <person name="Henze S."/>
            <person name="Korn B."/>
        </authorList>
    </citation>
    <scope>NUCLEOTIDE SEQUENCE [LARGE SCALE MRNA]</scope>
</reference>
<reference key="4">
    <citation type="journal article" date="2007" name="BMC Genomics">
        <title>The full-ORF clone resource of the German cDNA consortium.</title>
        <authorList>
            <person name="Bechtel S."/>
            <person name="Rosenfelder H."/>
            <person name="Duda A."/>
            <person name="Schmidt C.P."/>
            <person name="Ernst U."/>
            <person name="Wellenreuther R."/>
            <person name="Mehrle A."/>
            <person name="Schuster C."/>
            <person name="Bahr A."/>
            <person name="Bloecker H."/>
            <person name="Heubner D."/>
            <person name="Hoerlein A."/>
            <person name="Michel G."/>
            <person name="Wedler H."/>
            <person name="Koehrer K."/>
            <person name="Ottenwaelder B."/>
            <person name="Poustka A."/>
            <person name="Wiemann S."/>
            <person name="Schupp I."/>
        </authorList>
    </citation>
    <scope>NUCLEOTIDE SEQUENCE [LARGE SCALE MRNA] (ISOFORMS 3 AND 4)</scope>
    <source>
        <tissue>Prostate</tissue>
    </source>
</reference>
<reference key="5">
    <citation type="journal article" date="2006" name="Nature">
        <title>The DNA sequence and biological annotation of human chromosome 1.</title>
        <authorList>
            <person name="Gregory S.G."/>
            <person name="Barlow K.F."/>
            <person name="McLay K.E."/>
            <person name="Kaul R."/>
            <person name="Swarbreck D."/>
            <person name="Dunham A."/>
            <person name="Scott C.E."/>
            <person name="Howe K.L."/>
            <person name="Woodfine K."/>
            <person name="Spencer C.C.A."/>
            <person name="Jones M.C."/>
            <person name="Gillson C."/>
            <person name="Searle S."/>
            <person name="Zhou Y."/>
            <person name="Kokocinski F."/>
            <person name="McDonald L."/>
            <person name="Evans R."/>
            <person name="Phillips K."/>
            <person name="Atkinson A."/>
            <person name="Cooper R."/>
            <person name="Jones C."/>
            <person name="Hall R.E."/>
            <person name="Andrews T.D."/>
            <person name="Lloyd C."/>
            <person name="Ainscough R."/>
            <person name="Almeida J.P."/>
            <person name="Ambrose K.D."/>
            <person name="Anderson F."/>
            <person name="Andrew R.W."/>
            <person name="Ashwell R.I.S."/>
            <person name="Aubin K."/>
            <person name="Babbage A.K."/>
            <person name="Bagguley C.L."/>
            <person name="Bailey J."/>
            <person name="Beasley H."/>
            <person name="Bethel G."/>
            <person name="Bird C.P."/>
            <person name="Bray-Allen S."/>
            <person name="Brown J.Y."/>
            <person name="Brown A.J."/>
            <person name="Buckley D."/>
            <person name="Burton J."/>
            <person name="Bye J."/>
            <person name="Carder C."/>
            <person name="Chapman J.C."/>
            <person name="Clark S.Y."/>
            <person name="Clarke G."/>
            <person name="Clee C."/>
            <person name="Cobley V."/>
            <person name="Collier R.E."/>
            <person name="Corby N."/>
            <person name="Coville G.J."/>
            <person name="Davies J."/>
            <person name="Deadman R."/>
            <person name="Dunn M."/>
            <person name="Earthrowl M."/>
            <person name="Ellington A.G."/>
            <person name="Errington H."/>
            <person name="Frankish A."/>
            <person name="Frankland J."/>
            <person name="French L."/>
            <person name="Garner P."/>
            <person name="Garnett J."/>
            <person name="Gay L."/>
            <person name="Ghori M.R.J."/>
            <person name="Gibson R."/>
            <person name="Gilby L.M."/>
            <person name="Gillett W."/>
            <person name="Glithero R.J."/>
            <person name="Grafham D.V."/>
            <person name="Griffiths C."/>
            <person name="Griffiths-Jones S."/>
            <person name="Grocock R."/>
            <person name="Hammond S."/>
            <person name="Harrison E.S.I."/>
            <person name="Hart E."/>
            <person name="Haugen E."/>
            <person name="Heath P.D."/>
            <person name="Holmes S."/>
            <person name="Holt K."/>
            <person name="Howden P.J."/>
            <person name="Hunt A.R."/>
            <person name="Hunt S.E."/>
            <person name="Hunter G."/>
            <person name="Isherwood J."/>
            <person name="James R."/>
            <person name="Johnson C."/>
            <person name="Johnson D."/>
            <person name="Joy A."/>
            <person name="Kay M."/>
            <person name="Kershaw J.K."/>
            <person name="Kibukawa M."/>
            <person name="Kimberley A.M."/>
            <person name="King A."/>
            <person name="Knights A.J."/>
            <person name="Lad H."/>
            <person name="Laird G."/>
            <person name="Lawlor S."/>
            <person name="Leongamornlert D.A."/>
            <person name="Lloyd D.M."/>
            <person name="Loveland J."/>
            <person name="Lovell J."/>
            <person name="Lush M.J."/>
            <person name="Lyne R."/>
            <person name="Martin S."/>
            <person name="Mashreghi-Mohammadi M."/>
            <person name="Matthews L."/>
            <person name="Matthews N.S.W."/>
            <person name="McLaren S."/>
            <person name="Milne S."/>
            <person name="Mistry S."/>
            <person name="Moore M.J.F."/>
            <person name="Nickerson T."/>
            <person name="O'Dell C.N."/>
            <person name="Oliver K."/>
            <person name="Palmeiri A."/>
            <person name="Palmer S.A."/>
            <person name="Parker A."/>
            <person name="Patel D."/>
            <person name="Pearce A.V."/>
            <person name="Peck A.I."/>
            <person name="Pelan S."/>
            <person name="Phelps K."/>
            <person name="Phillimore B.J."/>
            <person name="Plumb R."/>
            <person name="Rajan J."/>
            <person name="Raymond C."/>
            <person name="Rouse G."/>
            <person name="Saenphimmachak C."/>
            <person name="Sehra H.K."/>
            <person name="Sheridan E."/>
            <person name="Shownkeen R."/>
            <person name="Sims S."/>
            <person name="Skuce C.D."/>
            <person name="Smith M."/>
            <person name="Steward C."/>
            <person name="Subramanian S."/>
            <person name="Sycamore N."/>
            <person name="Tracey A."/>
            <person name="Tromans A."/>
            <person name="Van Helmond Z."/>
            <person name="Wall M."/>
            <person name="Wallis J.M."/>
            <person name="White S."/>
            <person name="Whitehead S.L."/>
            <person name="Wilkinson J.E."/>
            <person name="Willey D.L."/>
            <person name="Williams H."/>
            <person name="Wilming L."/>
            <person name="Wray P.W."/>
            <person name="Wu Z."/>
            <person name="Coulson A."/>
            <person name="Vaudin M."/>
            <person name="Sulston J.E."/>
            <person name="Durbin R.M."/>
            <person name="Hubbard T."/>
            <person name="Wooster R."/>
            <person name="Dunham I."/>
            <person name="Carter N.P."/>
            <person name="McVean G."/>
            <person name="Ross M.T."/>
            <person name="Harrow J."/>
            <person name="Olson M.V."/>
            <person name="Beck S."/>
            <person name="Rogers J."/>
            <person name="Bentley D.R."/>
        </authorList>
    </citation>
    <scope>NUCLEOTIDE SEQUENCE [LARGE SCALE GENOMIC DNA]</scope>
</reference>
<reference key="6">
    <citation type="submission" date="2005-09" db="EMBL/GenBank/DDBJ databases">
        <authorList>
            <person name="Mural R.J."/>
            <person name="Istrail S."/>
            <person name="Sutton G.G."/>
            <person name="Florea L."/>
            <person name="Halpern A.L."/>
            <person name="Mobarry C.M."/>
            <person name="Lippert R."/>
            <person name="Walenz B."/>
            <person name="Shatkay H."/>
            <person name="Dew I."/>
            <person name="Miller J.R."/>
            <person name="Flanigan M.J."/>
            <person name="Edwards N.J."/>
            <person name="Bolanos R."/>
            <person name="Fasulo D."/>
            <person name="Halldorsson B.V."/>
            <person name="Hannenhalli S."/>
            <person name="Turner R."/>
            <person name="Yooseph S."/>
            <person name="Lu F."/>
            <person name="Nusskern D.R."/>
            <person name="Shue B.C."/>
            <person name="Zheng X.H."/>
            <person name="Zhong F."/>
            <person name="Delcher A.L."/>
            <person name="Huson D.H."/>
            <person name="Kravitz S.A."/>
            <person name="Mouchard L."/>
            <person name="Reinert K."/>
            <person name="Remington K.A."/>
            <person name="Clark A.G."/>
            <person name="Waterman M.S."/>
            <person name="Eichler E.E."/>
            <person name="Adams M.D."/>
            <person name="Hunkapiller M.W."/>
            <person name="Myers E.W."/>
            <person name="Venter J.C."/>
        </authorList>
    </citation>
    <scope>NUCLEOTIDE SEQUENCE [LARGE SCALE GENOMIC DNA]</scope>
</reference>
<reference key="7">
    <citation type="journal article" date="2004" name="Genome Res.">
        <title>The status, quality, and expansion of the NIH full-length cDNA project: the Mammalian Gene Collection (MGC).</title>
        <authorList>
            <consortium name="The MGC Project Team"/>
        </authorList>
    </citation>
    <scope>NUCLEOTIDE SEQUENCE [LARGE SCALE MRNA] (ISOFORMS 1 AND 2)</scope>
    <source>
        <tissue>Brain</tissue>
    </source>
</reference>
<reference key="8">
    <citation type="journal article" date="2010" name="Sci. Signal.">
        <title>Quantitative phosphoproteomics reveals widespread full phosphorylation site occupancy during mitosis.</title>
        <authorList>
            <person name="Olsen J.V."/>
            <person name="Vermeulen M."/>
            <person name="Santamaria A."/>
            <person name="Kumar C."/>
            <person name="Miller M.L."/>
            <person name="Jensen L.J."/>
            <person name="Gnad F."/>
            <person name="Cox J."/>
            <person name="Jensen T.S."/>
            <person name="Nigg E.A."/>
            <person name="Brunak S."/>
            <person name="Mann M."/>
        </authorList>
    </citation>
    <scope>PHOSPHORYLATION [LARGE SCALE ANALYSIS] AT SER-92 AND SER-418</scope>
    <scope>IDENTIFICATION BY MASS SPECTROMETRY [LARGE SCALE ANALYSIS]</scope>
    <source>
        <tissue>Cervix carcinoma</tissue>
    </source>
</reference>
<reference key="9">
    <citation type="journal article" date="2011" name="BMC Syst. Biol.">
        <title>Initial characterization of the human central proteome.</title>
        <authorList>
            <person name="Burkard T.R."/>
            <person name="Planyavsky M."/>
            <person name="Kaupe I."/>
            <person name="Breitwieser F.P."/>
            <person name="Buerckstuemmer T."/>
            <person name="Bennett K.L."/>
            <person name="Superti-Furga G."/>
            <person name="Colinge J."/>
        </authorList>
    </citation>
    <scope>IDENTIFICATION BY MASS SPECTROMETRY [LARGE SCALE ANALYSIS]</scope>
</reference>
<reference key="10">
    <citation type="journal article" date="2011" name="Sci. Signal.">
        <title>System-wide temporal characterization of the proteome and phosphoproteome of human embryonic stem cell differentiation.</title>
        <authorList>
            <person name="Rigbolt K.T."/>
            <person name="Prokhorova T.A."/>
            <person name="Akimov V."/>
            <person name="Henningsen J."/>
            <person name="Johansen P.T."/>
            <person name="Kratchmarova I."/>
            <person name="Kassem M."/>
            <person name="Mann M."/>
            <person name="Olsen J.V."/>
            <person name="Blagoev B."/>
        </authorList>
    </citation>
    <scope>IDENTIFICATION BY MASS SPECTROMETRY [LARGE SCALE ANALYSIS]</scope>
</reference>
<reference key="11">
    <citation type="journal article" date="2013" name="J. Proteome Res.">
        <title>Toward a comprehensive characterization of a human cancer cell phosphoproteome.</title>
        <authorList>
            <person name="Zhou H."/>
            <person name="Di Palma S."/>
            <person name="Preisinger C."/>
            <person name="Peng M."/>
            <person name="Polat A.N."/>
            <person name="Heck A.J."/>
            <person name="Mohammed S."/>
        </authorList>
    </citation>
    <scope>PHOSPHORYLATION [LARGE SCALE ANALYSIS] AT SER-166; THR-356; SER-387 AND SER-388</scope>
    <scope>IDENTIFICATION BY MASS SPECTROMETRY [LARGE SCALE ANALYSIS]</scope>
    <source>
        <tissue>Erythroleukemia</tissue>
    </source>
</reference>
<reference key="12">
    <citation type="journal article" date="2014" name="J. Proteomics">
        <title>An enzyme assisted RP-RPLC approach for in-depth analysis of human liver phosphoproteome.</title>
        <authorList>
            <person name="Bian Y."/>
            <person name="Song C."/>
            <person name="Cheng K."/>
            <person name="Dong M."/>
            <person name="Wang F."/>
            <person name="Huang J."/>
            <person name="Sun D."/>
            <person name="Wang L."/>
            <person name="Ye M."/>
            <person name="Zou H."/>
        </authorList>
    </citation>
    <scope>PHOSPHORYLATION [LARGE SCALE ANALYSIS] AT SER-387</scope>
    <scope>IDENTIFICATION BY MASS SPECTROMETRY [LARGE SCALE ANALYSIS]</scope>
    <source>
        <tissue>Liver</tissue>
    </source>
</reference>
<feature type="chain" id="PRO_0000282639" description="BSD domain-containing protein 1">
    <location>
        <begin position="1"/>
        <end position="430"/>
    </location>
</feature>
<feature type="domain" description="BSD" evidence="1">
    <location>
        <begin position="146"/>
        <end position="198"/>
    </location>
</feature>
<feature type="region of interest" description="Disordered" evidence="2">
    <location>
        <begin position="247"/>
        <end position="298"/>
    </location>
</feature>
<feature type="region of interest" description="Disordered" evidence="2">
    <location>
        <begin position="319"/>
        <end position="398"/>
    </location>
</feature>
<feature type="compositionally biased region" description="Polar residues" evidence="2">
    <location>
        <begin position="276"/>
        <end position="291"/>
    </location>
</feature>
<feature type="compositionally biased region" description="Basic and acidic residues" evidence="2">
    <location>
        <begin position="350"/>
        <end position="367"/>
    </location>
</feature>
<feature type="compositionally biased region" description="Polar residues" evidence="2">
    <location>
        <begin position="371"/>
        <end position="390"/>
    </location>
</feature>
<feature type="modified residue" description="Phosphoserine" evidence="8">
    <location>
        <position position="92"/>
    </location>
</feature>
<feature type="modified residue" description="Phosphoserine" evidence="9">
    <location>
        <position position="166"/>
    </location>
</feature>
<feature type="modified residue" description="Phosphothreonine" evidence="9">
    <location>
        <position position="356"/>
    </location>
</feature>
<feature type="modified residue" description="Phosphoserine" evidence="9 10">
    <location>
        <position position="387"/>
    </location>
</feature>
<feature type="modified residue" description="Phosphoserine" evidence="9">
    <location>
        <position position="388"/>
    </location>
</feature>
<feature type="modified residue" description="Phosphoserine" evidence="8">
    <location>
        <position position="418"/>
    </location>
</feature>
<feature type="splice variant" id="VSP_024216" description="In isoform 6." evidence="3">
    <location>
        <begin position="1"/>
        <end position="359"/>
    </location>
</feature>
<feature type="splice variant" id="VSP_024217" description="In isoform 4." evidence="4 6">
    <location>
        <begin position="1"/>
        <end position="104"/>
    </location>
</feature>
<feature type="splice variant" id="VSP_041672" description="In isoform 9." evidence="4">
    <location>
        <begin position="25"/>
        <end position="119"/>
    </location>
</feature>
<feature type="splice variant" id="VSP_024218" description="In isoform 3 and isoform 7." evidence="4 6">
    <original>A</original>
    <variation>AIAACSRGACFLCPFSIQ</variation>
    <location>
        <position position="63"/>
    </location>
</feature>
<feature type="splice variant" id="VSP_041673" description="In isoform 8." evidence="4">
    <original>TEGSSGATEKMKKGLSDFLGVISDTFAPSPDKTIDCDVITLMGTPSGTAEPYDGTKA</original>
    <variation>A</variation>
    <location>
        <begin position="64"/>
        <end position="120"/>
    </location>
</feature>
<feature type="splice variant" id="VSP_024219" description="In isoform 5." evidence="4">
    <original>WLSQFCLEEKKGEISELLVGSPSIRALY</original>
    <variation>CQPELWAQILVAPCWPSWASAHTWEGAL</variation>
    <location>
        <begin position="146"/>
        <end position="173"/>
    </location>
</feature>
<feature type="splice variant" id="VSP_024220" description="In isoform 5." evidence="4">
    <location>
        <begin position="174"/>
        <end position="430"/>
    </location>
</feature>
<feature type="splice variant" id="VSP_024221" description="In isoform 6." evidence="3">
    <original>EAPTDLRVFELNSDSGKSTPSNNGKK</original>
    <variation>MLSPQLHPLQVPLPCLLLLFTLWLVVP</variation>
    <location>
        <begin position="360"/>
        <end position="385"/>
    </location>
</feature>
<feature type="splice variant" id="VSP_024222" description="In isoform 2." evidence="5">
    <original>G</original>
    <variation>ETRSQFTVDFLWKISVTLLEPLGQSASPLFSNLPFPRLKHGHQ</variation>
    <location>
        <position position="386"/>
    </location>
</feature>
<feature type="splice variant" id="VSP_024223" description="In isoform 2." evidence="5">
    <location>
        <begin position="387"/>
        <end position="430"/>
    </location>
</feature>
<feature type="splice variant" id="VSP_024224" description="In isoform 3, isoform 4 and isoform 6." evidence="3 4 6">
    <original>LEDVEWEDWE</original>
    <variation>VSGPGGSEGSEPNGPGCESSPQPAQLSPQEGPCSCLR</variation>
    <location>
        <begin position="421"/>
        <end position="430"/>
    </location>
</feature>
<feature type="sequence conflict" description="In Ref. 4; CAH18084." evidence="7" ref="4">
    <original>D</original>
    <variation>G</variation>
    <location>
        <position position="128"/>
    </location>
</feature>
<feature type="sequence conflict" description="In Ref. 7; AAH26322." evidence="7" ref="7">
    <original>D</original>
    <variation>G</variation>
    <location>
        <position position="137"/>
    </location>
</feature>
<feature type="sequence conflict" description="In Ref. 2; BAB13825." evidence="7" ref="2">
    <original>F</original>
    <variation>L</variation>
    <location>
        <position position="143"/>
    </location>
</feature>
<feature type="sequence conflict" description="In Ref. 7; AAH26322." evidence="7" ref="7">
    <original>Q</original>
    <variation>K</variation>
    <location>
        <position position="149"/>
    </location>
</feature>
<feature type="sequence conflict" description="In Ref. 7; AAH26322." evidence="7" ref="7">
    <original>P</original>
    <variation>H</variation>
    <location>
        <position position="250"/>
    </location>
</feature>
<feature type="sequence conflict" description="In Ref. 7; AAH26322." evidence="7" ref="7">
    <original>T</original>
    <variation>A</variation>
    <location>
        <position position="287"/>
    </location>
</feature>
<feature type="sequence conflict" description="In Ref. 3; CAG33533." evidence="7" ref="3">
    <original>E</original>
    <variation>D</variation>
    <location>
        <position position="430"/>
    </location>
</feature>
<comment type="interaction">
    <interactant intactId="EBI-721848">
        <id>Q9NW68</id>
    </interactant>
    <interactant intactId="EBI-3907816">
        <id>P54852</id>
        <label>EMP3</label>
    </interactant>
    <organismsDiffer>false</organismsDiffer>
    <experiments>3</experiments>
</comment>
<comment type="interaction">
    <interactant intactId="EBI-721848">
        <id>Q9NW68</id>
    </interactant>
    <interactant intactId="EBI-746969">
        <id>Q9H0R8</id>
        <label>GABARAPL1</label>
    </interactant>
    <organismsDiffer>false</organismsDiffer>
    <experiments>3</experiments>
</comment>
<comment type="interaction">
    <interactant intactId="EBI-721848">
        <id>Q9NW68</id>
    </interactant>
    <interactant intactId="EBI-720116">
        <id>P60520</id>
        <label>GABARAPL2</label>
    </interactant>
    <organismsDiffer>false</organismsDiffer>
    <experiments>3</experiments>
</comment>
<comment type="interaction">
    <interactant intactId="EBI-721848">
        <id>Q9NW68</id>
    </interactant>
    <interactant intactId="EBI-11119202">
        <id>Q9UL33-2</id>
        <label>TRAPPC2L</label>
    </interactant>
    <organismsDiffer>false</organismsDiffer>
    <experiments>3</experiments>
</comment>
<comment type="alternative products">
    <event type="alternative splicing"/>
    <isoform>
        <id>Q9NW68-1</id>
        <name>1</name>
        <sequence type="displayed"/>
    </isoform>
    <isoform>
        <id>Q9NW68-2</id>
        <name>2</name>
        <sequence type="described" ref="VSP_024222 VSP_024223"/>
    </isoform>
    <isoform>
        <id>Q9NW68-3</id>
        <name>3</name>
        <sequence type="described" ref="VSP_024218 VSP_024224"/>
    </isoform>
    <isoform>
        <id>Q9NW68-4</id>
        <name>4</name>
        <sequence type="described" ref="VSP_024217 VSP_024224"/>
    </isoform>
    <isoform>
        <id>Q9NW68-5</id>
        <name>5</name>
        <sequence type="described" ref="VSP_024219 VSP_024220"/>
    </isoform>
    <isoform>
        <id>Q9NW68-6</id>
        <name>6</name>
        <sequence type="described" ref="VSP_024216 VSP_024221 VSP_024224"/>
    </isoform>
    <isoform>
        <id>Q9NW68-7</id>
        <name>7</name>
        <sequence type="described" ref="VSP_024218"/>
    </isoform>
    <isoform>
        <id>Q9NW68-8</id>
        <name>8</name>
        <sequence type="described" ref="VSP_041673"/>
    </isoform>
    <isoform>
        <id>Q9NW68-9</id>
        <name>9</name>
        <sequence type="described" ref="VSP_041672"/>
    </isoform>
</comment>
<gene>
    <name type="primary">BSDC1</name>
    <name type="ORF">UNQ2494/PRO5781</name>
</gene>
<proteinExistence type="evidence at protein level"/>
<evidence type="ECO:0000255" key="1">
    <source>
        <dbReference type="PROSITE-ProRule" id="PRU00036"/>
    </source>
</evidence>
<evidence type="ECO:0000256" key="2">
    <source>
        <dbReference type="SAM" id="MobiDB-lite"/>
    </source>
</evidence>
<evidence type="ECO:0000303" key="3">
    <source>
    </source>
</evidence>
<evidence type="ECO:0000303" key="4">
    <source>
    </source>
</evidence>
<evidence type="ECO:0000303" key="5">
    <source>
    </source>
</evidence>
<evidence type="ECO:0000303" key="6">
    <source>
    </source>
</evidence>
<evidence type="ECO:0000305" key="7"/>
<evidence type="ECO:0007744" key="8">
    <source>
    </source>
</evidence>
<evidence type="ECO:0007744" key="9">
    <source>
    </source>
</evidence>
<evidence type="ECO:0007744" key="10">
    <source>
    </source>
</evidence>